<name>PSA_SACS2</name>
<keyword id="KW-0963">Cytoplasm</keyword>
<keyword id="KW-0647">Proteasome</keyword>
<keyword id="KW-1185">Reference proteome</keyword>
<accession>Q9UXC6</accession>
<feature type="chain" id="PRO_0000124187" description="Proteasome subunit alpha">
    <location>
        <begin position="1"/>
        <end position="241"/>
    </location>
</feature>
<dbReference type="EMBL" id="Y18930">
    <property type="protein sequence ID" value="CAB57565.1"/>
    <property type="molecule type" value="Genomic_DNA"/>
</dbReference>
<dbReference type="EMBL" id="AE006641">
    <property type="protein sequence ID" value="AAK41034.1"/>
    <property type="molecule type" value="Genomic_DNA"/>
</dbReference>
<dbReference type="PIR" id="C90222">
    <property type="entry name" value="C90222"/>
</dbReference>
<dbReference type="RefSeq" id="WP_009991312.1">
    <property type="nucleotide sequence ID" value="NC_002754.1"/>
</dbReference>
<dbReference type="SMR" id="Q9UXC6"/>
<dbReference type="FunCoup" id="Q9UXC6">
    <property type="interactions" value="205"/>
</dbReference>
<dbReference type="STRING" id="273057.SSO0738"/>
<dbReference type="PaxDb" id="273057-SSO0738"/>
<dbReference type="EnsemblBacteria" id="AAK41034">
    <property type="protein sequence ID" value="AAK41034"/>
    <property type="gene ID" value="SSO0738"/>
</dbReference>
<dbReference type="GeneID" id="44129734"/>
<dbReference type="KEGG" id="sso:SSO0738"/>
<dbReference type="PATRIC" id="fig|273057.12.peg.734"/>
<dbReference type="eggNOG" id="arCOG00971">
    <property type="taxonomic scope" value="Archaea"/>
</dbReference>
<dbReference type="HOGENOM" id="CLU_035750_4_1_2"/>
<dbReference type="InParanoid" id="Q9UXC6"/>
<dbReference type="PhylomeDB" id="Q9UXC6"/>
<dbReference type="Proteomes" id="UP000001974">
    <property type="component" value="Chromosome"/>
</dbReference>
<dbReference type="GO" id="GO:0005737">
    <property type="term" value="C:cytoplasm"/>
    <property type="evidence" value="ECO:0007669"/>
    <property type="project" value="UniProtKB-SubCell"/>
</dbReference>
<dbReference type="GO" id="GO:0019773">
    <property type="term" value="C:proteasome core complex, alpha-subunit complex"/>
    <property type="evidence" value="ECO:0000250"/>
    <property type="project" value="UniProtKB"/>
</dbReference>
<dbReference type="GO" id="GO:0004298">
    <property type="term" value="F:threonine-type endopeptidase activity"/>
    <property type="evidence" value="ECO:0007669"/>
    <property type="project" value="InterPro"/>
</dbReference>
<dbReference type="GO" id="GO:0043161">
    <property type="term" value="P:proteasome-mediated ubiquitin-dependent protein catabolic process"/>
    <property type="evidence" value="ECO:0000318"/>
    <property type="project" value="GO_Central"/>
</dbReference>
<dbReference type="CDD" id="cd03756">
    <property type="entry name" value="proteasome_alpha_archeal"/>
    <property type="match status" value="1"/>
</dbReference>
<dbReference type="FunFam" id="3.60.20.10:FF:000004">
    <property type="entry name" value="Proteasome subunit alpha type-4"/>
    <property type="match status" value="1"/>
</dbReference>
<dbReference type="Gene3D" id="3.60.20.10">
    <property type="entry name" value="Glutamine Phosphoribosylpyrophosphate, subunit 1, domain 1"/>
    <property type="match status" value="1"/>
</dbReference>
<dbReference type="HAMAP" id="MF_00289_A">
    <property type="entry name" value="Proteasome_A_A"/>
    <property type="match status" value="1"/>
</dbReference>
<dbReference type="InterPro" id="IPR029055">
    <property type="entry name" value="Ntn_hydrolases_N"/>
</dbReference>
<dbReference type="InterPro" id="IPR050115">
    <property type="entry name" value="Proteasome_alpha"/>
</dbReference>
<dbReference type="InterPro" id="IPR023332">
    <property type="entry name" value="Proteasome_alpha-type"/>
</dbReference>
<dbReference type="InterPro" id="IPR019982">
    <property type="entry name" value="Proteasome_asu_arc"/>
</dbReference>
<dbReference type="InterPro" id="IPR000426">
    <property type="entry name" value="Proteasome_asu_N"/>
</dbReference>
<dbReference type="InterPro" id="IPR001353">
    <property type="entry name" value="Proteasome_sua/b"/>
</dbReference>
<dbReference type="NCBIfam" id="TIGR03633">
    <property type="entry name" value="arc_protsome_A"/>
    <property type="match status" value="1"/>
</dbReference>
<dbReference type="NCBIfam" id="NF003075">
    <property type="entry name" value="PRK03996.1"/>
    <property type="match status" value="1"/>
</dbReference>
<dbReference type="PANTHER" id="PTHR11599">
    <property type="entry name" value="PROTEASOME SUBUNIT ALPHA/BETA"/>
    <property type="match status" value="1"/>
</dbReference>
<dbReference type="Pfam" id="PF00227">
    <property type="entry name" value="Proteasome"/>
    <property type="match status" value="1"/>
</dbReference>
<dbReference type="Pfam" id="PF10584">
    <property type="entry name" value="Proteasome_A_N"/>
    <property type="match status" value="1"/>
</dbReference>
<dbReference type="SMART" id="SM00948">
    <property type="entry name" value="Proteasome_A_N"/>
    <property type="match status" value="1"/>
</dbReference>
<dbReference type="SUPFAM" id="SSF56235">
    <property type="entry name" value="N-terminal nucleophile aminohydrolases (Ntn hydrolases)"/>
    <property type="match status" value="1"/>
</dbReference>
<dbReference type="PROSITE" id="PS00388">
    <property type="entry name" value="PROTEASOME_ALPHA_1"/>
    <property type="match status" value="1"/>
</dbReference>
<dbReference type="PROSITE" id="PS51475">
    <property type="entry name" value="PROTEASOME_ALPHA_2"/>
    <property type="match status" value="1"/>
</dbReference>
<sequence length="241" mass="26589">MAFGPAAMGYDRAITIFSPDGSLYQVDYAFEAVKKGWTAIGIKSKSSVVIASEKRKAQSLLDVDSIEKVFLIDDHVGCSFAGLASDGRVLIDYARNIALQHRLIYDEPVSIDYLTKSVADVKQMYTQHGGVRPFGVALVIAGIDKSVPKLFMTEPSGQYMPYQAVAIGQGYYTATEFLEKNYKEDLNVEETILLALKALSATLKPNEKLTPNTVEIGYASTQTGLFLKMTNEDKNMYLQKL</sequence>
<proteinExistence type="inferred from homology"/>
<reference key="1">
    <citation type="journal article" date="2000" name="Genome">
        <title>Gene content and organization of a 281-kbp contig from the genome of the extremely thermophilic archaeon, Sulfolobus solfataricus P2.</title>
        <authorList>
            <person name="Charlebois R.L."/>
            <person name="Singh R.K."/>
            <person name="Chan-Weiher C.C.-Y."/>
            <person name="Allard G."/>
            <person name="Chow C."/>
            <person name="Confalonieri F."/>
            <person name="Curtis B."/>
            <person name="Duguet M."/>
            <person name="Erauso G."/>
            <person name="Faguy D."/>
            <person name="Gaasterland T."/>
            <person name="Garrett R.A."/>
            <person name="Gordon P."/>
            <person name="Jeffries A.C."/>
            <person name="Kozera C."/>
            <person name="Kushwaha N."/>
            <person name="Lafleur E."/>
            <person name="Medina N."/>
            <person name="Peng X."/>
            <person name="Penny S.L."/>
            <person name="She Q."/>
            <person name="St Jean A."/>
            <person name="van der Oost J."/>
            <person name="Young F."/>
            <person name="Zivanovic Y."/>
            <person name="Doolittle W.F."/>
            <person name="Ragan M.A."/>
            <person name="Sensen C.W."/>
        </authorList>
    </citation>
    <scope>NUCLEOTIDE SEQUENCE [LARGE SCALE GENOMIC DNA]</scope>
    <source>
        <strain>ATCC 35092 / DSM 1617 / JCM 11322 / P2</strain>
    </source>
</reference>
<reference key="2">
    <citation type="journal article" date="2001" name="Proc. Natl. Acad. Sci. U.S.A.">
        <title>The complete genome of the crenarchaeon Sulfolobus solfataricus P2.</title>
        <authorList>
            <person name="She Q."/>
            <person name="Singh R.K."/>
            <person name="Confalonieri F."/>
            <person name="Zivanovic Y."/>
            <person name="Allard G."/>
            <person name="Awayez M.J."/>
            <person name="Chan-Weiher C.C.-Y."/>
            <person name="Clausen I.G."/>
            <person name="Curtis B.A."/>
            <person name="De Moors A."/>
            <person name="Erauso G."/>
            <person name="Fletcher C."/>
            <person name="Gordon P.M.K."/>
            <person name="Heikamp-de Jong I."/>
            <person name="Jeffries A.C."/>
            <person name="Kozera C.J."/>
            <person name="Medina N."/>
            <person name="Peng X."/>
            <person name="Thi-Ngoc H.P."/>
            <person name="Redder P."/>
            <person name="Schenk M.E."/>
            <person name="Theriault C."/>
            <person name="Tolstrup N."/>
            <person name="Charlebois R.L."/>
            <person name="Doolittle W.F."/>
            <person name="Duguet M."/>
            <person name="Gaasterland T."/>
            <person name="Garrett R.A."/>
            <person name="Ragan M.A."/>
            <person name="Sensen C.W."/>
            <person name="Van der Oost J."/>
        </authorList>
    </citation>
    <scope>NUCLEOTIDE SEQUENCE [LARGE SCALE GENOMIC DNA]</scope>
    <source>
        <strain>ATCC 35092 / DSM 1617 / JCM 11322 / P2</strain>
    </source>
</reference>
<organism>
    <name type="scientific">Saccharolobus solfataricus (strain ATCC 35092 / DSM 1617 / JCM 11322 / P2)</name>
    <name type="common">Sulfolobus solfataricus</name>
    <dbReference type="NCBI Taxonomy" id="273057"/>
    <lineage>
        <taxon>Archaea</taxon>
        <taxon>Thermoproteota</taxon>
        <taxon>Thermoprotei</taxon>
        <taxon>Sulfolobales</taxon>
        <taxon>Sulfolobaceae</taxon>
        <taxon>Saccharolobus</taxon>
    </lineage>
</organism>
<comment type="function">
    <text evidence="1">Component of the proteasome core, a large protease complex with broad specificity involved in protein degradation.</text>
</comment>
<comment type="activity regulation">
    <text evidence="1">The formation of the proteasomal ATPase PAN-20S proteasome complex, via the docking of the C-termini of PAN into the intersubunit pockets in the alpha-rings, triggers opening of the gate for substrate entry. Interconversion between the open-gate and close-gate conformations leads to a dynamic regulation of the 20S proteasome proteolysis activity.</text>
</comment>
<comment type="subunit">
    <text evidence="1">The 20S proteasome core is composed of 14 alpha and 14 beta subunits that assemble into four stacked heptameric rings, resulting in a barrel-shaped structure. The two inner rings, each composed of seven catalytic beta subunits, are sandwiched by two outer rings, each composed of seven alpha subunits. The catalytic chamber with the active sites is on the inside of the barrel. Has a gated structure, the ends of the cylinder being occluded by the N-termini of the alpha-subunits. Is capped at one or both ends by the proteasome regulatory ATPase, PAN.</text>
</comment>
<comment type="subcellular location">
    <subcellularLocation>
        <location evidence="1">Cytoplasm</location>
    </subcellularLocation>
</comment>
<comment type="similarity">
    <text evidence="1">Belongs to the peptidase T1A family.</text>
</comment>
<gene>
    <name evidence="1" type="primary">psmA</name>
    <name type="ordered locus">SSO0738</name>
</gene>
<protein>
    <recommendedName>
        <fullName evidence="1">Proteasome subunit alpha</fullName>
    </recommendedName>
    <alternativeName>
        <fullName evidence="1">20S proteasome alpha subunit</fullName>
    </alternativeName>
    <alternativeName>
        <fullName evidence="1">Proteasome core protein PsmA</fullName>
    </alternativeName>
</protein>
<evidence type="ECO:0000255" key="1">
    <source>
        <dbReference type="HAMAP-Rule" id="MF_00289"/>
    </source>
</evidence>